<organism>
    <name type="scientific">Lactobacillus acidophilus (strain ATCC 700396 / NCK56 / N2 / NCFM)</name>
    <dbReference type="NCBI Taxonomy" id="272621"/>
    <lineage>
        <taxon>Bacteria</taxon>
        <taxon>Bacillati</taxon>
        <taxon>Bacillota</taxon>
        <taxon>Bacilli</taxon>
        <taxon>Lactobacillales</taxon>
        <taxon>Lactobacillaceae</taxon>
        <taxon>Lactobacillus</taxon>
    </lineage>
</organism>
<proteinExistence type="inferred from homology"/>
<sequence length="349" mass="37748">MSEKKDVRILAYESSCDETSTAVIKNGREIESLIVATQIKSHQRFGGVVPEVASRHHIEVVSQITKEALNEANCSWKDIDAIAVTYGPGLVGALLIGVSAAKAVSMATGIPLIGVDHIMGHIMAAQLKDEIEYPAIALQVSGGHTEIVLLKDPTHFEIIGDTRDDAAGEAYDKIGRVLGVNYPAGKTIDAWAHQGKDTFNFPRAMLEDDDYDFSFSGLKSAFINTCHHADQIHEKLNKYDLAASFQAAVIDVLAHKTIRAIKEYKPKTFIMGGGVAANQGLRDRMSEEIAKLPKADQPKVILPDLKLCGDNAAMIGAAAYNLYNGGQFADLTLNADPSLELPYAKSMLN</sequence>
<dbReference type="EC" id="2.3.1.234" evidence="1"/>
<dbReference type="EMBL" id="CP000033">
    <property type="protein sequence ID" value="AAV42281.1"/>
    <property type="molecule type" value="Genomic_DNA"/>
</dbReference>
<dbReference type="RefSeq" id="WP_003549127.1">
    <property type="nucleotide sequence ID" value="NC_006814.3"/>
</dbReference>
<dbReference type="RefSeq" id="YP_193312.1">
    <property type="nucleotide sequence ID" value="NC_006814.3"/>
</dbReference>
<dbReference type="SMR" id="Q5FLZ3"/>
<dbReference type="STRING" id="272621.LBA0390"/>
<dbReference type="GeneID" id="93290510"/>
<dbReference type="KEGG" id="lac:LBA0390"/>
<dbReference type="PATRIC" id="fig|272621.13.peg.376"/>
<dbReference type="eggNOG" id="COG0533">
    <property type="taxonomic scope" value="Bacteria"/>
</dbReference>
<dbReference type="HOGENOM" id="CLU_023208_0_2_9"/>
<dbReference type="OrthoDB" id="9806197at2"/>
<dbReference type="BioCyc" id="LACI272621:G1G49-384-MONOMER"/>
<dbReference type="Proteomes" id="UP000006381">
    <property type="component" value="Chromosome"/>
</dbReference>
<dbReference type="GO" id="GO:0005737">
    <property type="term" value="C:cytoplasm"/>
    <property type="evidence" value="ECO:0007669"/>
    <property type="project" value="UniProtKB-SubCell"/>
</dbReference>
<dbReference type="GO" id="GO:0005506">
    <property type="term" value="F:iron ion binding"/>
    <property type="evidence" value="ECO:0007669"/>
    <property type="project" value="UniProtKB-UniRule"/>
</dbReference>
<dbReference type="GO" id="GO:0061711">
    <property type="term" value="F:N(6)-L-threonylcarbamoyladenine synthase activity"/>
    <property type="evidence" value="ECO:0007669"/>
    <property type="project" value="UniProtKB-EC"/>
</dbReference>
<dbReference type="GO" id="GO:0002949">
    <property type="term" value="P:tRNA threonylcarbamoyladenosine modification"/>
    <property type="evidence" value="ECO:0007669"/>
    <property type="project" value="UniProtKB-UniRule"/>
</dbReference>
<dbReference type="CDD" id="cd24133">
    <property type="entry name" value="ASKHA_NBD_TsaD_bac"/>
    <property type="match status" value="1"/>
</dbReference>
<dbReference type="FunFam" id="3.30.420.40:FF:000040">
    <property type="entry name" value="tRNA N6-adenosine threonylcarbamoyltransferase"/>
    <property type="match status" value="1"/>
</dbReference>
<dbReference type="Gene3D" id="3.30.420.40">
    <property type="match status" value="2"/>
</dbReference>
<dbReference type="HAMAP" id="MF_01445">
    <property type="entry name" value="TsaD"/>
    <property type="match status" value="1"/>
</dbReference>
<dbReference type="InterPro" id="IPR043129">
    <property type="entry name" value="ATPase_NBD"/>
</dbReference>
<dbReference type="InterPro" id="IPR000905">
    <property type="entry name" value="Gcp-like_dom"/>
</dbReference>
<dbReference type="InterPro" id="IPR017861">
    <property type="entry name" value="KAE1/TsaD"/>
</dbReference>
<dbReference type="InterPro" id="IPR022450">
    <property type="entry name" value="TsaD"/>
</dbReference>
<dbReference type="NCBIfam" id="TIGR00329">
    <property type="entry name" value="gcp_kae1"/>
    <property type="match status" value="1"/>
</dbReference>
<dbReference type="NCBIfam" id="TIGR03723">
    <property type="entry name" value="T6A_TsaD_YgjD"/>
    <property type="match status" value="1"/>
</dbReference>
<dbReference type="PANTHER" id="PTHR11735">
    <property type="entry name" value="TRNA N6-ADENOSINE THREONYLCARBAMOYLTRANSFERASE"/>
    <property type="match status" value="1"/>
</dbReference>
<dbReference type="PANTHER" id="PTHR11735:SF6">
    <property type="entry name" value="TRNA N6-ADENOSINE THREONYLCARBAMOYLTRANSFERASE, MITOCHONDRIAL"/>
    <property type="match status" value="1"/>
</dbReference>
<dbReference type="Pfam" id="PF00814">
    <property type="entry name" value="TsaD"/>
    <property type="match status" value="1"/>
</dbReference>
<dbReference type="PRINTS" id="PR00789">
    <property type="entry name" value="OSIALOPTASE"/>
</dbReference>
<dbReference type="SUPFAM" id="SSF53067">
    <property type="entry name" value="Actin-like ATPase domain"/>
    <property type="match status" value="2"/>
</dbReference>
<keyword id="KW-0012">Acyltransferase</keyword>
<keyword id="KW-0963">Cytoplasm</keyword>
<keyword id="KW-0408">Iron</keyword>
<keyword id="KW-0479">Metal-binding</keyword>
<keyword id="KW-1185">Reference proteome</keyword>
<keyword id="KW-0808">Transferase</keyword>
<keyword id="KW-0819">tRNA processing</keyword>
<name>TSAD_LACAC</name>
<feature type="chain" id="PRO_0000303389" description="tRNA N6-adenosine threonylcarbamoyltransferase">
    <location>
        <begin position="1"/>
        <end position="349"/>
    </location>
</feature>
<feature type="binding site" evidence="1">
    <location>
        <position position="117"/>
    </location>
    <ligand>
        <name>Fe cation</name>
        <dbReference type="ChEBI" id="CHEBI:24875"/>
    </ligand>
</feature>
<feature type="binding site" evidence="1">
    <location>
        <position position="121"/>
    </location>
    <ligand>
        <name>Fe cation</name>
        <dbReference type="ChEBI" id="CHEBI:24875"/>
    </ligand>
</feature>
<feature type="binding site" evidence="1">
    <location>
        <begin position="139"/>
        <end position="143"/>
    </location>
    <ligand>
        <name>substrate</name>
    </ligand>
</feature>
<feature type="binding site" evidence="1">
    <location>
        <position position="172"/>
    </location>
    <ligand>
        <name>substrate</name>
    </ligand>
</feature>
<feature type="binding site" evidence="1">
    <location>
        <position position="185"/>
    </location>
    <ligand>
        <name>substrate</name>
    </ligand>
</feature>
<feature type="binding site" evidence="1">
    <location>
        <position position="189"/>
    </location>
    <ligand>
        <name>substrate</name>
    </ligand>
</feature>
<feature type="binding site" evidence="1">
    <location>
        <position position="278"/>
    </location>
    <ligand>
        <name>substrate</name>
    </ligand>
</feature>
<feature type="binding site" evidence="1">
    <location>
        <position position="310"/>
    </location>
    <ligand>
        <name>Fe cation</name>
        <dbReference type="ChEBI" id="CHEBI:24875"/>
    </ligand>
</feature>
<evidence type="ECO:0000255" key="1">
    <source>
        <dbReference type="HAMAP-Rule" id="MF_01445"/>
    </source>
</evidence>
<gene>
    <name evidence="1" type="primary">tsaD</name>
    <name type="synonym">gcp</name>
    <name type="ordered locus">LBA0390</name>
</gene>
<protein>
    <recommendedName>
        <fullName evidence="1">tRNA N6-adenosine threonylcarbamoyltransferase</fullName>
        <ecNumber evidence="1">2.3.1.234</ecNumber>
    </recommendedName>
    <alternativeName>
        <fullName evidence="1">N6-L-threonylcarbamoyladenine synthase</fullName>
        <shortName evidence="1">t(6)A synthase</shortName>
    </alternativeName>
    <alternativeName>
        <fullName evidence="1">t(6)A37 threonylcarbamoyladenosine biosynthesis protein TsaD</fullName>
    </alternativeName>
    <alternativeName>
        <fullName evidence="1">tRNA threonylcarbamoyladenosine biosynthesis protein TsaD</fullName>
    </alternativeName>
</protein>
<reference key="1">
    <citation type="journal article" date="2005" name="Proc. Natl. Acad. Sci. U.S.A.">
        <title>Complete genome sequence of the probiotic lactic acid bacterium Lactobacillus acidophilus NCFM.</title>
        <authorList>
            <person name="Altermann E."/>
            <person name="Russell W.M."/>
            <person name="Azcarate-Peril M.A."/>
            <person name="Barrangou R."/>
            <person name="Buck B.L."/>
            <person name="McAuliffe O."/>
            <person name="Souther N."/>
            <person name="Dobson A."/>
            <person name="Duong T."/>
            <person name="Callanan M."/>
            <person name="Lick S."/>
            <person name="Hamrick A."/>
            <person name="Cano R."/>
            <person name="Klaenhammer T.R."/>
        </authorList>
    </citation>
    <scope>NUCLEOTIDE SEQUENCE [LARGE SCALE GENOMIC DNA]</scope>
    <source>
        <strain>ATCC 700396 / NCK56 / N2 / NCFM</strain>
    </source>
</reference>
<comment type="function">
    <text evidence="1">Required for the formation of a threonylcarbamoyl group on adenosine at position 37 (t(6)A37) in tRNAs that read codons beginning with adenine. Is involved in the transfer of the threonylcarbamoyl moiety of threonylcarbamoyl-AMP (TC-AMP) to the N6 group of A37, together with TsaE and TsaB. TsaD likely plays a direct catalytic role in this reaction.</text>
</comment>
<comment type="catalytic activity">
    <reaction evidence="1">
        <text>L-threonylcarbamoyladenylate + adenosine(37) in tRNA = N(6)-L-threonylcarbamoyladenosine(37) in tRNA + AMP + H(+)</text>
        <dbReference type="Rhea" id="RHEA:37059"/>
        <dbReference type="Rhea" id="RHEA-COMP:10162"/>
        <dbReference type="Rhea" id="RHEA-COMP:10163"/>
        <dbReference type="ChEBI" id="CHEBI:15378"/>
        <dbReference type="ChEBI" id="CHEBI:73682"/>
        <dbReference type="ChEBI" id="CHEBI:74411"/>
        <dbReference type="ChEBI" id="CHEBI:74418"/>
        <dbReference type="ChEBI" id="CHEBI:456215"/>
        <dbReference type="EC" id="2.3.1.234"/>
    </reaction>
</comment>
<comment type="cofactor">
    <cofactor evidence="1">
        <name>Fe(2+)</name>
        <dbReference type="ChEBI" id="CHEBI:29033"/>
    </cofactor>
    <text evidence="1">Binds 1 Fe(2+) ion per subunit.</text>
</comment>
<comment type="subcellular location">
    <subcellularLocation>
        <location evidence="1">Cytoplasm</location>
    </subcellularLocation>
</comment>
<comment type="similarity">
    <text evidence="1">Belongs to the KAE1 / TsaD family.</text>
</comment>
<accession>Q5FLZ3</accession>